<accession>P00674</accession>
<protein>
    <recommendedName>
        <fullName>Ribonuclease pancreatic</fullName>
        <ecNumber>4.6.1.18</ecNumber>
    </recommendedName>
    <alternativeName>
        <fullName>RNase 1</fullName>
    </alternativeName>
    <alternativeName>
        <fullName>RNase A</fullName>
    </alternativeName>
</protein>
<reference key="1">
    <citation type="journal article" date="1974" name="Eur. J. Biochem.">
        <title>Horse pancreatic ribonuclease.</title>
        <authorList>
            <person name="Scheffer A.J."/>
            <person name="Beintema J.J."/>
        </authorList>
    </citation>
    <scope>PRELIMINARY PROTEIN SEQUENCE</scope>
    <scope>GLYCOSYLATION AT ASN-34 AND ASN-62</scope>
</reference>
<reference key="2">
    <citation type="journal article" date="1985" name="FEBS Lett.">
        <title>Mammalian ribonucleases. The absence of a glycosylated Asn-Pro-Thr sequence in horse ribonuclease and the presence of tryptophan at position 39 in horse and dromedary ribonuclease.</title>
        <authorList>
            <person name="Beintema J.J."/>
        </authorList>
    </citation>
    <scope>SEQUENCE REVISION</scope>
</reference>
<sequence length="128" mass="14374">KESPAMKFERQHMDSGSTSSSNPTYCNQMMKRRNMTQGWCKPVNTFVHEPLADVQAICLQKNITCKNGQSNCYQSSSSMHITDCRLTSGSKYPNCAYQTSQKERHIIVACEGNPYVPVHFDASVEVST</sequence>
<comment type="function">
    <text evidence="1">Endonuclease that catalyzes the cleavage of RNA on the 3' side of pyrimidine nucleotides. Acts on single-stranded and double-stranded RNA (By similarity).</text>
</comment>
<comment type="catalytic activity">
    <reaction>
        <text>an [RNA] containing cytidine + H2O = an [RNA]-3'-cytidine-3'-phosphate + a 5'-hydroxy-ribonucleotide-3'-[RNA].</text>
        <dbReference type="EC" id="4.6.1.18"/>
    </reaction>
</comment>
<comment type="catalytic activity">
    <reaction>
        <text>an [RNA] containing uridine + H2O = an [RNA]-3'-uridine-3'-phosphate + a 5'-hydroxy-ribonucleotide-3'-[RNA].</text>
        <dbReference type="EC" id="4.6.1.18"/>
    </reaction>
</comment>
<comment type="subunit">
    <text evidence="1">Monomer. Interacts with and forms tight 1:1 complexes with RNH1. Dimerization of two such complexes may occur. Interaction with RNH1 inhibits this protein (By similarity).</text>
</comment>
<comment type="subcellular location">
    <subcellularLocation>
        <location>Secreted</location>
    </subcellularLocation>
</comment>
<comment type="tissue specificity">
    <text>Pancreas.</text>
</comment>
<comment type="similarity">
    <text evidence="4">Belongs to the pancreatic ribonuclease family.</text>
</comment>
<dbReference type="EC" id="4.6.1.18"/>
<dbReference type="PIR" id="A91340">
    <property type="entry name" value="NRHO"/>
</dbReference>
<dbReference type="SMR" id="P00674"/>
<dbReference type="FunCoup" id="P00674">
    <property type="interactions" value="24"/>
</dbReference>
<dbReference type="STRING" id="9796.ENSECAP00000036780"/>
<dbReference type="GlyCosmos" id="P00674">
    <property type="glycosylation" value="2 sites, No reported glycans"/>
</dbReference>
<dbReference type="iPTMnet" id="P00674"/>
<dbReference type="PaxDb" id="9796-ENSECAP00000036780"/>
<dbReference type="PeptideAtlas" id="P00674"/>
<dbReference type="InParanoid" id="P00674"/>
<dbReference type="SABIO-RK" id="P00674"/>
<dbReference type="Proteomes" id="UP000002281">
    <property type="component" value="Unplaced"/>
</dbReference>
<dbReference type="GO" id="GO:0005576">
    <property type="term" value="C:extracellular region"/>
    <property type="evidence" value="ECO:0007669"/>
    <property type="project" value="UniProtKB-SubCell"/>
</dbReference>
<dbReference type="GO" id="GO:0016829">
    <property type="term" value="F:lyase activity"/>
    <property type="evidence" value="ECO:0007669"/>
    <property type="project" value="UniProtKB-KW"/>
</dbReference>
<dbReference type="GO" id="GO:0003676">
    <property type="term" value="F:nucleic acid binding"/>
    <property type="evidence" value="ECO:0007669"/>
    <property type="project" value="InterPro"/>
</dbReference>
<dbReference type="GO" id="GO:0004522">
    <property type="term" value="F:ribonuclease A activity"/>
    <property type="evidence" value="ECO:0007669"/>
    <property type="project" value="UniProtKB-EC"/>
</dbReference>
<dbReference type="GO" id="GO:0004540">
    <property type="term" value="F:RNA nuclease activity"/>
    <property type="evidence" value="ECO:0000318"/>
    <property type="project" value="GO_Central"/>
</dbReference>
<dbReference type="GO" id="GO:0050830">
    <property type="term" value="P:defense response to Gram-positive bacterium"/>
    <property type="evidence" value="ECO:0000318"/>
    <property type="project" value="GO_Central"/>
</dbReference>
<dbReference type="CDD" id="cd06265">
    <property type="entry name" value="RNase_A_canonical"/>
    <property type="match status" value="1"/>
</dbReference>
<dbReference type="FunFam" id="3.10.130.10:FF:000001">
    <property type="entry name" value="Ribonuclease pancreatic"/>
    <property type="match status" value="1"/>
</dbReference>
<dbReference type="Gene3D" id="3.10.130.10">
    <property type="entry name" value="Ribonuclease A-like domain"/>
    <property type="match status" value="1"/>
</dbReference>
<dbReference type="InterPro" id="IPR001427">
    <property type="entry name" value="RNaseA"/>
</dbReference>
<dbReference type="InterPro" id="IPR036816">
    <property type="entry name" value="RNaseA-like_dom_sf"/>
</dbReference>
<dbReference type="InterPro" id="IPR023411">
    <property type="entry name" value="RNaseA_AS"/>
</dbReference>
<dbReference type="InterPro" id="IPR023412">
    <property type="entry name" value="RNaseA_domain"/>
</dbReference>
<dbReference type="PANTHER" id="PTHR11437">
    <property type="entry name" value="RIBONUCLEASE"/>
    <property type="match status" value="1"/>
</dbReference>
<dbReference type="PANTHER" id="PTHR11437:SF24">
    <property type="entry name" value="RIBONUCLEASE PANCREATIC"/>
    <property type="match status" value="1"/>
</dbReference>
<dbReference type="Pfam" id="PF00074">
    <property type="entry name" value="RnaseA"/>
    <property type="match status" value="1"/>
</dbReference>
<dbReference type="PRINTS" id="PR00794">
    <property type="entry name" value="RIBONUCLEASE"/>
</dbReference>
<dbReference type="SMART" id="SM00092">
    <property type="entry name" value="RNAse_Pc"/>
    <property type="match status" value="1"/>
</dbReference>
<dbReference type="SUPFAM" id="SSF54076">
    <property type="entry name" value="RNase A-like"/>
    <property type="match status" value="1"/>
</dbReference>
<dbReference type="PROSITE" id="PS00127">
    <property type="entry name" value="RNASE_PANCREATIC"/>
    <property type="match status" value="1"/>
</dbReference>
<feature type="chain" id="PRO_0000057200" description="Ribonuclease pancreatic">
    <location>
        <begin position="1"/>
        <end position="128"/>
    </location>
</feature>
<feature type="region of interest" description="Disordered" evidence="2">
    <location>
        <begin position="1"/>
        <end position="26"/>
    </location>
</feature>
<feature type="compositionally biased region" description="Basic and acidic residues" evidence="2">
    <location>
        <begin position="1"/>
        <end position="13"/>
    </location>
</feature>
<feature type="compositionally biased region" description="Polar residues" evidence="2">
    <location>
        <begin position="14"/>
        <end position="26"/>
    </location>
</feature>
<feature type="active site" description="Proton acceptor" evidence="1">
    <location>
        <position position="12"/>
    </location>
</feature>
<feature type="active site" description="Proton donor" evidence="1">
    <location>
        <position position="119"/>
    </location>
</feature>
<feature type="binding site" evidence="1">
    <location>
        <position position="7"/>
    </location>
    <ligand>
        <name>substrate</name>
    </ligand>
</feature>
<feature type="binding site" evidence="1">
    <location>
        <position position="10"/>
    </location>
    <ligand>
        <name>substrate</name>
    </ligand>
</feature>
<feature type="binding site" evidence="1">
    <location>
        <begin position="41"/>
        <end position="45"/>
    </location>
    <ligand>
        <name>substrate</name>
    </ligand>
</feature>
<feature type="binding site" evidence="1">
    <location>
        <position position="66"/>
    </location>
    <ligand>
        <name>substrate</name>
    </ligand>
</feature>
<feature type="binding site" evidence="1">
    <location>
        <position position="85"/>
    </location>
    <ligand>
        <name>substrate</name>
    </ligand>
</feature>
<feature type="glycosylation site" description="N-linked (GlcNAc...) asparagine" evidence="3">
    <location>
        <position position="34"/>
    </location>
</feature>
<feature type="glycosylation site" description="N-linked (GlcNAc...) asparagine" evidence="3">
    <location>
        <position position="62"/>
    </location>
</feature>
<feature type="disulfide bond" evidence="1">
    <location>
        <begin position="26"/>
        <end position="84"/>
    </location>
</feature>
<feature type="disulfide bond" evidence="1">
    <location>
        <begin position="40"/>
        <end position="95"/>
    </location>
</feature>
<feature type="disulfide bond" evidence="1">
    <location>
        <begin position="58"/>
        <end position="110"/>
    </location>
</feature>
<feature type="disulfide bond" evidence="1">
    <location>
        <begin position="65"/>
        <end position="72"/>
    </location>
</feature>
<proteinExistence type="evidence at protein level"/>
<keyword id="KW-0903">Direct protein sequencing</keyword>
<keyword id="KW-1015">Disulfide bond</keyword>
<keyword id="KW-0255">Endonuclease</keyword>
<keyword id="KW-0325">Glycoprotein</keyword>
<keyword id="KW-0378">Hydrolase</keyword>
<keyword id="KW-0456">Lyase</keyword>
<keyword id="KW-0540">Nuclease</keyword>
<keyword id="KW-1185">Reference proteome</keyword>
<keyword id="KW-0964">Secreted</keyword>
<gene>
    <name type="primary">RNASE1</name>
    <name type="synonym">RNS1</name>
</gene>
<evidence type="ECO:0000250" key="1"/>
<evidence type="ECO:0000256" key="2">
    <source>
        <dbReference type="SAM" id="MobiDB-lite"/>
    </source>
</evidence>
<evidence type="ECO:0000269" key="3">
    <source>
    </source>
</evidence>
<evidence type="ECO:0000305" key="4"/>
<organism>
    <name type="scientific">Equus caballus</name>
    <name type="common">Horse</name>
    <dbReference type="NCBI Taxonomy" id="9796"/>
    <lineage>
        <taxon>Eukaryota</taxon>
        <taxon>Metazoa</taxon>
        <taxon>Chordata</taxon>
        <taxon>Craniata</taxon>
        <taxon>Vertebrata</taxon>
        <taxon>Euteleostomi</taxon>
        <taxon>Mammalia</taxon>
        <taxon>Eutheria</taxon>
        <taxon>Laurasiatheria</taxon>
        <taxon>Perissodactyla</taxon>
        <taxon>Equidae</taxon>
        <taxon>Equus</taxon>
    </lineage>
</organism>
<name>RNAS1_HORSE</name>